<feature type="chain" id="PRO_0000144332" description="ATP synthase subunit alpha">
    <location>
        <begin position="1"/>
        <end position="500"/>
    </location>
</feature>
<feature type="binding site" evidence="1">
    <location>
        <begin position="169"/>
        <end position="176"/>
    </location>
    <ligand>
        <name>ATP</name>
        <dbReference type="ChEBI" id="CHEBI:30616"/>
    </ligand>
</feature>
<feature type="site" description="Required for activity" evidence="1">
    <location>
        <position position="362"/>
    </location>
</feature>
<feature type="sequence conflict" description="In Ref. 2; BAB69469." evidence="2" ref="2">
    <original>V</original>
    <variation>I</variation>
    <location>
        <position position="59"/>
    </location>
</feature>
<feature type="sequence conflict" description="In Ref. 1; AAK84017." evidence="2" ref="1">
    <original>C</original>
    <variation>W</variation>
    <location>
        <position position="193"/>
    </location>
</feature>
<feature type="sequence conflict" description="In Ref. 2; BAB69469." evidence="2" ref="2">
    <original>D</original>
    <variation>N</variation>
    <location>
        <position position="447"/>
    </location>
</feature>
<feature type="sequence conflict" description="In Ref. 2; BAB69469." evidence="2" ref="2">
    <original>E</original>
    <variation>D</variation>
    <location>
        <position position="470"/>
    </location>
</feature>
<feature type="sequence conflict" description="In Ref. 2; BAB69469." evidence="2" ref="2">
    <original>E</original>
    <variation>D</variation>
    <location>
        <position position="477"/>
    </location>
</feature>
<dbReference type="EC" id="7.1.2.2" evidence="1"/>
<dbReference type="EMBL" id="AF393838">
    <property type="protein sequence ID" value="AAK84017.1"/>
    <property type="molecule type" value="Genomic_DNA"/>
</dbReference>
<dbReference type="EMBL" id="AB072443">
    <property type="protein sequence ID" value="BAB69469.1"/>
    <property type="molecule type" value="Genomic_DNA"/>
</dbReference>
<dbReference type="EMBL" id="AE005176">
    <property type="protein sequence ID" value="AAK05864.1"/>
    <property type="molecule type" value="Genomic_DNA"/>
</dbReference>
<dbReference type="PIR" id="F86845">
    <property type="entry name" value="F86845"/>
</dbReference>
<dbReference type="RefSeq" id="NP_267922.1">
    <property type="nucleotide sequence ID" value="NC_002662.1"/>
</dbReference>
<dbReference type="RefSeq" id="WP_004255265.1">
    <property type="nucleotide sequence ID" value="NC_002662.1"/>
</dbReference>
<dbReference type="SMR" id="Q9CER8"/>
<dbReference type="PaxDb" id="272623-L8990"/>
<dbReference type="EnsemblBacteria" id="AAK05864">
    <property type="protein sequence ID" value="AAK05864"/>
    <property type="gene ID" value="L8990"/>
</dbReference>
<dbReference type="GeneID" id="89633967"/>
<dbReference type="KEGG" id="lla:L8990"/>
<dbReference type="PATRIC" id="fig|272623.7.peg.1893"/>
<dbReference type="eggNOG" id="COG0056">
    <property type="taxonomic scope" value="Bacteria"/>
</dbReference>
<dbReference type="HOGENOM" id="CLU_010091_2_1_9"/>
<dbReference type="OrthoDB" id="9803053at2"/>
<dbReference type="Proteomes" id="UP000002196">
    <property type="component" value="Chromosome"/>
</dbReference>
<dbReference type="GO" id="GO:0005886">
    <property type="term" value="C:plasma membrane"/>
    <property type="evidence" value="ECO:0007669"/>
    <property type="project" value="UniProtKB-SubCell"/>
</dbReference>
<dbReference type="GO" id="GO:0045259">
    <property type="term" value="C:proton-transporting ATP synthase complex"/>
    <property type="evidence" value="ECO:0007669"/>
    <property type="project" value="UniProtKB-KW"/>
</dbReference>
<dbReference type="GO" id="GO:0043531">
    <property type="term" value="F:ADP binding"/>
    <property type="evidence" value="ECO:0007669"/>
    <property type="project" value="TreeGrafter"/>
</dbReference>
<dbReference type="GO" id="GO:0005524">
    <property type="term" value="F:ATP binding"/>
    <property type="evidence" value="ECO:0007669"/>
    <property type="project" value="UniProtKB-UniRule"/>
</dbReference>
<dbReference type="GO" id="GO:0046933">
    <property type="term" value="F:proton-transporting ATP synthase activity, rotational mechanism"/>
    <property type="evidence" value="ECO:0007669"/>
    <property type="project" value="UniProtKB-UniRule"/>
</dbReference>
<dbReference type="CDD" id="cd18113">
    <property type="entry name" value="ATP-synt_F1_alpha_C"/>
    <property type="match status" value="1"/>
</dbReference>
<dbReference type="CDD" id="cd18116">
    <property type="entry name" value="ATP-synt_F1_alpha_N"/>
    <property type="match status" value="1"/>
</dbReference>
<dbReference type="CDD" id="cd01132">
    <property type="entry name" value="F1-ATPase_alpha_CD"/>
    <property type="match status" value="1"/>
</dbReference>
<dbReference type="FunFam" id="1.20.150.20:FF:000001">
    <property type="entry name" value="ATP synthase subunit alpha"/>
    <property type="match status" value="1"/>
</dbReference>
<dbReference type="FunFam" id="2.40.30.20:FF:000001">
    <property type="entry name" value="ATP synthase subunit alpha"/>
    <property type="match status" value="1"/>
</dbReference>
<dbReference type="FunFam" id="3.40.50.300:FF:000002">
    <property type="entry name" value="ATP synthase subunit alpha"/>
    <property type="match status" value="1"/>
</dbReference>
<dbReference type="Gene3D" id="2.40.30.20">
    <property type="match status" value="1"/>
</dbReference>
<dbReference type="Gene3D" id="1.20.150.20">
    <property type="entry name" value="ATP synthase alpha/beta chain, C-terminal domain"/>
    <property type="match status" value="1"/>
</dbReference>
<dbReference type="Gene3D" id="3.40.50.300">
    <property type="entry name" value="P-loop containing nucleotide triphosphate hydrolases"/>
    <property type="match status" value="1"/>
</dbReference>
<dbReference type="HAMAP" id="MF_01346">
    <property type="entry name" value="ATP_synth_alpha_bact"/>
    <property type="match status" value="1"/>
</dbReference>
<dbReference type="InterPro" id="IPR023366">
    <property type="entry name" value="ATP_synth_asu-like_sf"/>
</dbReference>
<dbReference type="InterPro" id="IPR000793">
    <property type="entry name" value="ATP_synth_asu_C"/>
</dbReference>
<dbReference type="InterPro" id="IPR038376">
    <property type="entry name" value="ATP_synth_asu_C_sf"/>
</dbReference>
<dbReference type="InterPro" id="IPR033732">
    <property type="entry name" value="ATP_synth_F1_a_nt-bd_dom"/>
</dbReference>
<dbReference type="InterPro" id="IPR005294">
    <property type="entry name" value="ATP_synth_F1_asu"/>
</dbReference>
<dbReference type="InterPro" id="IPR004100">
    <property type="entry name" value="ATPase_F1/V1/A1_a/bsu_N"/>
</dbReference>
<dbReference type="InterPro" id="IPR036121">
    <property type="entry name" value="ATPase_F1/V1/A1_a/bsu_N_sf"/>
</dbReference>
<dbReference type="InterPro" id="IPR000194">
    <property type="entry name" value="ATPase_F1/V1/A1_a/bsu_nucl-bd"/>
</dbReference>
<dbReference type="InterPro" id="IPR027417">
    <property type="entry name" value="P-loop_NTPase"/>
</dbReference>
<dbReference type="NCBIfam" id="TIGR00962">
    <property type="entry name" value="atpA"/>
    <property type="match status" value="1"/>
</dbReference>
<dbReference type="NCBIfam" id="NF009884">
    <property type="entry name" value="PRK13343.1"/>
    <property type="match status" value="1"/>
</dbReference>
<dbReference type="PANTHER" id="PTHR48082">
    <property type="entry name" value="ATP SYNTHASE SUBUNIT ALPHA, MITOCHONDRIAL"/>
    <property type="match status" value="1"/>
</dbReference>
<dbReference type="PANTHER" id="PTHR48082:SF2">
    <property type="entry name" value="ATP SYNTHASE SUBUNIT ALPHA, MITOCHONDRIAL"/>
    <property type="match status" value="1"/>
</dbReference>
<dbReference type="Pfam" id="PF00006">
    <property type="entry name" value="ATP-synt_ab"/>
    <property type="match status" value="1"/>
</dbReference>
<dbReference type="Pfam" id="PF00306">
    <property type="entry name" value="ATP-synt_ab_C"/>
    <property type="match status" value="1"/>
</dbReference>
<dbReference type="Pfam" id="PF02874">
    <property type="entry name" value="ATP-synt_ab_N"/>
    <property type="match status" value="1"/>
</dbReference>
<dbReference type="PIRSF" id="PIRSF039088">
    <property type="entry name" value="F_ATPase_subunit_alpha"/>
    <property type="match status" value="1"/>
</dbReference>
<dbReference type="SUPFAM" id="SSF47917">
    <property type="entry name" value="C-terminal domain of alpha and beta subunits of F1 ATP synthase"/>
    <property type="match status" value="1"/>
</dbReference>
<dbReference type="SUPFAM" id="SSF50615">
    <property type="entry name" value="N-terminal domain of alpha and beta subunits of F1 ATP synthase"/>
    <property type="match status" value="1"/>
</dbReference>
<dbReference type="SUPFAM" id="SSF52540">
    <property type="entry name" value="P-loop containing nucleoside triphosphate hydrolases"/>
    <property type="match status" value="1"/>
</dbReference>
<sequence>MAIKANEISSLIKKQIENFTPDFEVAETGVVTYVGDGIARAYGLENAMSGELVEFSNGVLGMAQNLDATDVGIIVLGDFLSIREGDTVKRTGKIMEIQVGEELIGRVVNPLGQPVDGLGELNTGKTRPVEAKAPGVMQRKSVSEPLQTGLKAIDALVPIGRGQRELIIGDRQTGKTSVAIDAILNQKGQDMICIYVAIGQKESTVRTQVETLRKLGAMDYTIVVTASASQPSPLLYIAPYAGAAMGEEFMYNGKHVLVVYDDLSKQAVAYRELSLLLRRPPGREAYPGDVFYLHSRLLERAAKLSDDLGGGSMTALPFIETQAGDISAYIATNVISITDGQIFLENDLFYSGVRPAIDAGSSVSRVGGAAQIKAMKKVAGTLRLDLASFRELEAFTQFGSDLDEATQAKLNRGRRTVEVLKQPLHKPLAVEKQVLILYALTHGHLDDVPVDDVLDFETKMFDFFDANYAELLNVITETKDLPEEAKLDEAIKAFKNTTNY</sequence>
<name>ATPA_LACLA</name>
<keyword id="KW-0066">ATP synthesis</keyword>
<keyword id="KW-0067">ATP-binding</keyword>
<keyword id="KW-1003">Cell membrane</keyword>
<keyword id="KW-0139">CF(1)</keyword>
<keyword id="KW-0375">Hydrogen ion transport</keyword>
<keyword id="KW-0406">Ion transport</keyword>
<keyword id="KW-0472">Membrane</keyword>
<keyword id="KW-0547">Nucleotide-binding</keyword>
<keyword id="KW-1185">Reference proteome</keyword>
<keyword id="KW-1278">Translocase</keyword>
<keyword id="KW-0813">Transport</keyword>
<protein>
    <recommendedName>
        <fullName evidence="1">ATP synthase subunit alpha</fullName>
        <ecNumber evidence="1">7.1.2.2</ecNumber>
    </recommendedName>
    <alternativeName>
        <fullName evidence="1">ATP synthase F1 sector subunit alpha</fullName>
    </alternativeName>
    <alternativeName>
        <fullName evidence="1">F-ATPase subunit alpha</fullName>
    </alternativeName>
</protein>
<accession>Q9CER8</accession>
<accession>Q93MY8</accession>
<accession>Q9RAU2</accession>
<comment type="function">
    <text evidence="1">Produces ATP from ADP in the presence of a proton gradient across the membrane. The alpha chain is a regulatory subunit.</text>
</comment>
<comment type="catalytic activity">
    <reaction evidence="1">
        <text>ATP + H2O + 4 H(+)(in) = ADP + phosphate + 5 H(+)(out)</text>
        <dbReference type="Rhea" id="RHEA:57720"/>
        <dbReference type="ChEBI" id="CHEBI:15377"/>
        <dbReference type="ChEBI" id="CHEBI:15378"/>
        <dbReference type="ChEBI" id="CHEBI:30616"/>
        <dbReference type="ChEBI" id="CHEBI:43474"/>
        <dbReference type="ChEBI" id="CHEBI:456216"/>
        <dbReference type="EC" id="7.1.2.2"/>
    </reaction>
</comment>
<comment type="subunit">
    <text evidence="1">F-type ATPases have 2 components, CF(1) - the catalytic core - and CF(0) - the membrane proton channel. CF(1) has five subunits: alpha(3), beta(3), gamma(1), delta(1), epsilon(1). CF(0) has three main subunits: a(1), b(2) and c(9-12). The alpha and beta chains form an alternating ring which encloses part of the gamma chain. CF(1) is attached to CF(0) by a central stalk formed by the gamma and epsilon chains, while a peripheral stalk is formed by the delta and b chains.</text>
</comment>
<comment type="subcellular location">
    <subcellularLocation>
        <location evidence="1">Cell membrane</location>
        <topology evidence="1">Peripheral membrane protein</topology>
    </subcellularLocation>
</comment>
<comment type="similarity">
    <text evidence="1">Belongs to the ATPase alpha/beta chains family.</text>
</comment>
<proteinExistence type="inferred from homology"/>
<evidence type="ECO:0000255" key="1">
    <source>
        <dbReference type="HAMAP-Rule" id="MF_01346"/>
    </source>
</evidence>
<evidence type="ECO:0000305" key="2"/>
<reference key="1">
    <citation type="submission" date="2001-06" db="EMBL/GenBank/DDBJ databases">
        <title>Sequence of the atp operon from Lactococcus lactis subsp. lactis CHCC373.</title>
        <authorList>
            <person name="Pedersen M.B."/>
            <person name="Kragelund L."/>
            <person name="Jensen P.R."/>
            <person name="Nilsson D."/>
        </authorList>
    </citation>
    <scope>NUCLEOTIDE SEQUENCE [GENOMIC DNA]</scope>
    <source>
        <strain>CHCC373</strain>
    </source>
</reference>
<reference key="2">
    <citation type="submission" date="2001-10" db="EMBL/GenBank/DDBJ databases">
        <title>Lactococcus lactis subsp. lactis C2 H+-ATPase operon.</title>
        <authorList>
            <person name="Ishikawa K."/>
            <person name="Fujii R."/>
            <person name="Tomita F."/>
            <person name="Yokota A."/>
        </authorList>
    </citation>
    <scope>NUCLEOTIDE SEQUENCE [GENOMIC DNA]</scope>
    <source>
        <strain>C2</strain>
    </source>
</reference>
<reference key="3">
    <citation type="journal article" date="2001" name="Genome Res.">
        <title>The complete genome sequence of the lactic acid bacterium Lactococcus lactis ssp. lactis IL1403.</title>
        <authorList>
            <person name="Bolotin A."/>
            <person name="Wincker P."/>
            <person name="Mauger S."/>
            <person name="Jaillon O."/>
            <person name="Malarme K."/>
            <person name="Weissenbach J."/>
            <person name="Ehrlich S.D."/>
            <person name="Sorokin A."/>
        </authorList>
    </citation>
    <scope>NUCLEOTIDE SEQUENCE [LARGE SCALE GENOMIC DNA]</scope>
    <source>
        <strain>IL1403</strain>
    </source>
</reference>
<organism>
    <name type="scientific">Lactococcus lactis subsp. lactis (strain IL1403)</name>
    <name type="common">Streptococcus lactis</name>
    <dbReference type="NCBI Taxonomy" id="272623"/>
    <lineage>
        <taxon>Bacteria</taxon>
        <taxon>Bacillati</taxon>
        <taxon>Bacillota</taxon>
        <taxon>Bacilli</taxon>
        <taxon>Lactobacillales</taxon>
        <taxon>Streptococcaceae</taxon>
        <taxon>Lactococcus</taxon>
    </lineage>
</organism>
<gene>
    <name evidence="1" type="primary">atpA</name>
    <name type="ordered locus">LL1766</name>
    <name type="ORF">L8990</name>
</gene>